<protein>
    <recommendedName>
        <fullName>Putative uncharacterized protein YBR232C</fullName>
    </recommendedName>
</protein>
<reference key="1">
    <citation type="journal article" date="1994" name="EMBO J.">
        <title>Complete DNA sequence of yeast chromosome II.</title>
        <authorList>
            <person name="Feldmann H."/>
            <person name="Aigle M."/>
            <person name="Aljinovic G."/>
            <person name="Andre B."/>
            <person name="Baclet M.C."/>
            <person name="Barthe C."/>
            <person name="Baur A."/>
            <person name="Becam A.-M."/>
            <person name="Biteau N."/>
            <person name="Boles E."/>
            <person name="Brandt T."/>
            <person name="Brendel M."/>
            <person name="Brueckner M."/>
            <person name="Bussereau F."/>
            <person name="Christiansen C."/>
            <person name="Contreras R."/>
            <person name="Crouzet M."/>
            <person name="Cziepluch C."/>
            <person name="Demolis N."/>
            <person name="Delaveau T."/>
            <person name="Doignon F."/>
            <person name="Domdey H."/>
            <person name="Duesterhus S."/>
            <person name="Dubois E."/>
            <person name="Dujon B."/>
            <person name="El Bakkoury M."/>
            <person name="Entian K.-D."/>
            <person name="Feuermann M."/>
            <person name="Fiers W."/>
            <person name="Fobo G.M."/>
            <person name="Fritz C."/>
            <person name="Gassenhuber J."/>
            <person name="Glansdorff N."/>
            <person name="Goffeau A."/>
            <person name="Grivell L.A."/>
            <person name="de Haan M."/>
            <person name="Hein C."/>
            <person name="Herbert C.J."/>
            <person name="Hollenberg C.P."/>
            <person name="Holmstroem K."/>
            <person name="Jacq C."/>
            <person name="Jacquet M."/>
            <person name="Jauniaux J.-C."/>
            <person name="Jonniaux J.-L."/>
            <person name="Kallesoee T."/>
            <person name="Kiesau P."/>
            <person name="Kirchrath L."/>
            <person name="Koetter P."/>
            <person name="Korol S."/>
            <person name="Liebl S."/>
            <person name="Logghe M."/>
            <person name="Lohan A.J.E."/>
            <person name="Louis E.J."/>
            <person name="Li Z.Y."/>
            <person name="Maat M.J."/>
            <person name="Mallet L."/>
            <person name="Mannhaupt G."/>
            <person name="Messenguy F."/>
            <person name="Miosga T."/>
            <person name="Molemans F."/>
            <person name="Mueller S."/>
            <person name="Nasr F."/>
            <person name="Obermaier B."/>
            <person name="Perea J."/>
            <person name="Pierard A."/>
            <person name="Piravandi E."/>
            <person name="Pohl F.M."/>
            <person name="Pohl T.M."/>
            <person name="Potier S."/>
            <person name="Proft M."/>
            <person name="Purnelle B."/>
            <person name="Ramezani Rad M."/>
            <person name="Rieger M."/>
            <person name="Rose M."/>
            <person name="Schaaff-Gerstenschlaeger I."/>
            <person name="Scherens B."/>
            <person name="Schwarzlose C."/>
            <person name="Skala J."/>
            <person name="Slonimski P.P."/>
            <person name="Smits P.H.M."/>
            <person name="Souciet J.-L."/>
            <person name="Steensma H.Y."/>
            <person name="Stucka R."/>
            <person name="Urrestarazu L.A."/>
            <person name="van der Aart Q.J.M."/>
            <person name="Van Dyck L."/>
            <person name="Vassarotti A."/>
            <person name="Vetter I."/>
            <person name="Vierendeels F."/>
            <person name="Vissers S."/>
            <person name="Wagner G."/>
            <person name="de Wergifosse P."/>
            <person name="Wolfe K.H."/>
            <person name="Zagulski M."/>
            <person name="Zimmermann F.K."/>
            <person name="Mewes H.-W."/>
            <person name="Kleine K."/>
        </authorList>
    </citation>
    <scope>NUCLEOTIDE SEQUENCE [LARGE SCALE GENOMIC DNA]</scope>
    <source>
        <strain>ATCC 204508 / S288c</strain>
    </source>
</reference>
<reference key="2">
    <citation type="journal article" date="2014" name="G3 (Bethesda)">
        <title>The reference genome sequence of Saccharomyces cerevisiae: Then and now.</title>
        <authorList>
            <person name="Engel S.R."/>
            <person name="Dietrich F.S."/>
            <person name="Fisk D.G."/>
            <person name="Binkley G."/>
            <person name="Balakrishnan R."/>
            <person name="Costanzo M.C."/>
            <person name="Dwight S.S."/>
            <person name="Hitz B.C."/>
            <person name="Karra K."/>
            <person name="Nash R.S."/>
            <person name="Weng S."/>
            <person name="Wong E.D."/>
            <person name="Lloyd P."/>
            <person name="Skrzypek M.S."/>
            <person name="Miyasato S.R."/>
            <person name="Simison M."/>
            <person name="Cherry J.M."/>
        </authorList>
    </citation>
    <scope>GENOME REANNOTATION</scope>
    <source>
        <strain>ATCC 204508 / S288c</strain>
    </source>
</reference>
<comment type="subcellular location">
    <subcellularLocation>
        <location evidence="2">Membrane</location>
        <topology evidence="2">Multi-pass membrane protein</topology>
    </subcellularLocation>
</comment>
<comment type="miscellaneous">
    <text evidence="2">Almost completely overlaps PBP2.</text>
</comment>
<comment type="caution">
    <text evidence="3">Product of a dubious gene prediction unlikely to encode a functional protein. Because of that it is not part of the S.cerevisiae S288c complete/reference proteome set.</text>
</comment>
<sequence length="119" mass="12750">MFILAEVSDFILDIVAPLCPTISEACLTKHSIRKCTSEGTLSGESWSLSEWLSASFRATRLISASSCSSLVSSPFFLLSVLGETSTVVGVVVIDGFVVSVDIIELKSITERLFNAALDD</sequence>
<gene>
    <name type="ordered locus">YBR232C</name>
    <name type="ORF">YBR1530</name>
</gene>
<evidence type="ECO:0000255" key="1"/>
<evidence type="ECO:0000305" key="2"/>
<evidence type="ECO:0000305" key="3">
    <source>
    </source>
</evidence>
<organism>
    <name type="scientific">Saccharomyces cerevisiae (strain ATCC 204508 / S288c)</name>
    <name type="common">Baker's yeast</name>
    <dbReference type="NCBI Taxonomy" id="559292"/>
    <lineage>
        <taxon>Eukaryota</taxon>
        <taxon>Fungi</taxon>
        <taxon>Dikarya</taxon>
        <taxon>Ascomycota</taxon>
        <taxon>Saccharomycotina</taxon>
        <taxon>Saccharomycetes</taxon>
        <taxon>Saccharomycetales</taxon>
        <taxon>Saccharomycetaceae</taxon>
        <taxon>Saccharomyces</taxon>
    </lineage>
</organism>
<keyword id="KW-0472">Membrane</keyword>
<keyword id="KW-0812">Transmembrane</keyword>
<keyword id="KW-1133">Transmembrane helix</keyword>
<name>YB82_YEAST</name>
<accession>P38327</accession>
<dbReference type="EMBL" id="Z36101">
    <property type="protein sequence ID" value="CAA85195.1"/>
    <property type="molecule type" value="Genomic_DNA"/>
</dbReference>
<dbReference type="PIR" id="S46108">
    <property type="entry name" value="S46108"/>
</dbReference>
<dbReference type="STRING" id="4932.YBR232C"/>
<dbReference type="PaxDb" id="4932-YBR232C"/>
<dbReference type="EnsemblFungi" id="YBR232C_mRNA">
    <property type="protein sequence ID" value="YBR232C"/>
    <property type="gene ID" value="YBR232C"/>
</dbReference>
<dbReference type="AGR" id="SGD:S000000436"/>
<dbReference type="SGD" id="S000000436">
    <property type="gene designation" value="YBR232C"/>
</dbReference>
<dbReference type="HOGENOM" id="CLU_2063314_0_0_1"/>
<dbReference type="GO" id="GO:0016020">
    <property type="term" value="C:membrane"/>
    <property type="evidence" value="ECO:0007669"/>
    <property type="project" value="UniProtKB-SubCell"/>
</dbReference>
<feature type="chain" id="PRO_0000202519" description="Putative uncharacterized protein YBR232C">
    <location>
        <begin position="1"/>
        <end position="119"/>
    </location>
</feature>
<feature type="transmembrane region" description="Helical" evidence="1">
    <location>
        <begin position="61"/>
        <end position="80"/>
    </location>
</feature>
<feature type="transmembrane region" description="Helical" evidence="1">
    <location>
        <begin position="87"/>
        <end position="103"/>
    </location>
</feature>
<proteinExistence type="uncertain"/>